<sequence length="394" mass="45106">MFKKFLWRDCVFIIVLITTIALPAYIHTNYPQAFSRFFYPVEAWFTKRDLRCSKNAPHFLRQLLIEMIDEQKSLNNQVAFWHNGQLFHCESGWEDGFRGEKPMRVNSRFRYASVTKVLTSALVLHAINEQKLSLDSKIIELLELPAPKDPRVAAITIKMLLEHSAGFDRLKTYTPMLTMDVKPWCPTNLAQLSETKLDFDPETQFQYSNVGYCLLGAAIEKAYGRSFQSVAEDYFQLKKYGVSYVGDGFLPDEIQYDYRFEPFYAESYSKHFDFKDSLYAVGGLSGSAADIVQLLAALPKETPLTIFSHNHAPCSINILDACYGYALQPYQASRQSYTLWGKSGFFPGVNTDVFLDEQGNILATFRAASTKKTADTLLLRQYAYSLMNEYVNQK</sequence>
<name>FIMDH_DICNO</name>
<organism>
    <name type="scientific">Dichelobacter nodosus</name>
    <name type="common">Bacteroides nodosus</name>
    <dbReference type="NCBI Taxonomy" id="870"/>
    <lineage>
        <taxon>Bacteria</taxon>
        <taxon>Pseudomonadati</taxon>
        <taxon>Pseudomonadota</taxon>
        <taxon>Gammaproteobacteria</taxon>
        <taxon>Cardiobacteriales</taxon>
        <taxon>Cardiobacteriaceae</taxon>
        <taxon>Dichelobacter</taxon>
    </lineage>
</organism>
<reference key="1">
    <citation type="journal article" date="1991" name="Mol. Microbiol.">
        <title>Organization of the fimbrial gene region of Bacteroides nodosus: class I and class II strains.</title>
        <authorList>
            <person name="Hobbs M."/>
            <person name="Dalrymple B.P."/>
            <person name="Cox P.T."/>
            <person name="Livingstone S.P."/>
            <person name="Delaney S.F."/>
            <person name="Mattick J.S."/>
        </authorList>
    </citation>
    <scope>NUCLEOTIDE SEQUENCE [GENOMIC DNA]</scope>
    <source>
        <strain>Serogroup H1 isolate VCS1215</strain>
    </source>
</reference>
<gene>
    <name type="primary">fimD</name>
</gene>
<proteinExistence type="predicted"/>
<feature type="chain" id="PRO_0000087254" description="Probable fimbrial assembly protein FimD, serogroup H1">
    <location>
        <begin position="1"/>
        <end position="394"/>
    </location>
</feature>
<protein>
    <recommendedName>
        <fullName>Probable fimbrial assembly protein FimD, serogroup H1</fullName>
    </recommendedName>
</protein>
<dbReference type="EMBL" id="X52390">
    <property type="protein sequence ID" value="CAA36621.1"/>
    <property type="molecule type" value="Genomic_DNA"/>
</dbReference>
<dbReference type="PIR" id="S15255">
    <property type="entry name" value="YQBZDH"/>
</dbReference>
<dbReference type="SMR" id="P17421"/>
<dbReference type="Gene3D" id="3.40.710.10">
    <property type="entry name" value="DD-peptidase/beta-lactamase superfamily"/>
    <property type="match status" value="1"/>
</dbReference>
<dbReference type="InterPro" id="IPR001466">
    <property type="entry name" value="Beta-lactam-related"/>
</dbReference>
<dbReference type="InterPro" id="IPR012338">
    <property type="entry name" value="Beta-lactam/transpept-like"/>
</dbReference>
<dbReference type="InterPro" id="IPR023650">
    <property type="entry name" value="Beta-lactam_class-A_AS"/>
</dbReference>
<dbReference type="InterPro" id="IPR050789">
    <property type="entry name" value="Diverse_Enzym_Activities"/>
</dbReference>
<dbReference type="PANTHER" id="PTHR43283:SF3">
    <property type="entry name" value="BETA-LACTAMASE FAMILY PROTEIN (AFU_ORTHOLOGUE AFUA_5G07500)"/>
    <property type="match status" value="1"/>
</dbReference>
<dbReference type="PANTHER" id="PTHR43283">
    <property type="entry name" value="BETA-LACTAMASE-RELATED"/>
    <property type="match status" value="1"/>
</dbReference>
<dbReference type="Pfam" id="PF00144">
    <property type="entry name" value="Beta-lactamase"/>
    <property type="match status" value="1"/>
</dbReference>
<dbReference type="SUPFAM" id="SSF56601">
    <property type="entry name" value="beta-lactamase/transpeptidase-like"/>
    <property type="match status" value="1"/>
</dbReference>
<dbReference type="PROSITE" id="PS00146">
    <property type="entry name" value="BETA_LACTAMASE_A"/>
    <property type="match status" value="1"/>
</dbReference>
<keyword id="KW-1029">Fimbrium biogenesis</keyword>
<accession>P17421</accession>